<keyword id="KW-0028">Amino-acid biosynthesis</keyword>
<keyword id="KW-0378">Hydrolase</keyword>
<keyword id="KW-0460">Magnesium</keyword>
<keyword id="KW-0479">Metal-binding</keyword>
<keyword id="KW-1185">Reference proteome</keyword>
<keyword id="KW-0718">Serine biosynthesis</keyword>
<sequence length="322" mass="35043">MPNITWCDLPEDVSLWPGLPLSLSGDEVMPLDYHAGRSGWLLYGRGLDKQRLTQYQSKLGAAMVIVAAWCVEDYQVIRLAGSLTARATRLAHEAQLDVAPLGKIPHLRTPGLLVMDMDSTAIQIECIDEIAKLAGTGEMVAEVTERAMRGELDFTASLRSRVATLKGADANILQQVRENLPLMPGLTQLVLKLETLGWKVAIASGGFTFFAEYLRDKLRLTAVVANELEIMDGKFTGNVIGDIVDAQYKAKTLTRLAQEYEIPLAQTVAIGDGANDLPMIKAAGLGIAYHAKPKVNEKAEVTIRHADLMGVFCILSGSLNQK</sequence>
<evidence type="ECO:0000250" key="1"/>
<evidence type="ECO:0000305" key="2"/>
<organism>
    <name type="scientific">Shigella flexneri</name>
    <dbReference type="NCBI Taxonomy" id="623"/>
    <lineage>
        <taxon>Bacteria</taxon>
        <taxon>Pseudomonadati</taxon>
        <taxon>Pseudomonadota</taxon>
        <taxon>Gammaproteobacteria</taxon>
        <taxon>Enterobacterales</taxon>
        <taxon>Enterobacteriaceae</taxon>
        <taxon>Shigella</taxon>
    </lineage>
</organism>
<gene>
    <name type="primary">serB</name>
    <name type="ordered locus">SF4420</name>
    <name type="ordered locus">S4691</name>
</gene>
<name>SERB_SHIFL</name>
<proteinExistence type="inferred from homology"/>
<feature type="chain" id="PRO_0000156889" description="Phosphoserine phosphatase">
    <location>
        <begin position="1"/>
        <end position="322"/>
    </location>
</feature>
<feature type="active site" description="Nucleophile" evidence="1">
    <location>
        <position position="116"/>
    </location>
</feature>
<feature type="active site" description="Proton donor" evidence="1">
    <location>
        <position position="118"/>
    </location>
</feature>
<feature type="binding site" evidence="1">
    <location>
        <begin position="10"/>
        <end position="12"/>
    </location>
    <ligand>
        <name>substrate</name>
    </ligand>
</feature>
<feature type="binding site" evidence="1">
    <location>
        <position position="12"/>
    </location>
    <ligand>
        <name>Mg(2+)</name>
        <dbReference type="ChEBI" id="CHEBI:18420"/>
    </ligand>
</feature>
<feature type="binding site" evidence="1">
    <location>
        <position position="116"/>
    </location>
    <ligand>
        <name>Mg(2+)</name>
        <dbReference type="ChEBI" id="CHEBI:18420"/>
    </ligand>
</feature>
<feature type="binding site" evidence="1">
    <location>
        <position position="118"/>
    </location>
    <ligand>
        <name>Mg(2+)</name>
        <dbReference type="ChEBI" id="CHEBI:18420"/>
    </ligand>
</feature>
<feature type="binding site" evidence="1">
    <location>
        <position position="125"/>
    </location>
    <ligand>
        <name>substrate</name>
    </ligand>
</feature>
<feature type="binding site" evidence="1">
    <location>
        <position position="161"/>
    </location>
    <ligand>
        <name>substrate</name>
    </ligand>
</feature>
<feature type="binding site" evidence="1">
    <location>
        <begin position="204"/>
        <end position="205"/>
    </location>
    <ligand>
        <name>substrate</name>
    </ligand>
</feature>
<feature type="binding site" evidence="1">
    <location>
        <position position="249"/>
    </location>
    <ligand>
        <name>substrate</name>
    </ligand>
</feature>
<feature type="binding site" evidence="1">
    <location>
        <position position="272"/>
    </location>
    <ligand>
        <name>Mg(2+)</name>
        <dbReference type="ChEBI" id="CHEBI:18420"/>
    </ligand>
</feature>
<feature type="binding site" evidence="1">
    <location>
        <position position="275"/>
    </location>
    <ligand>
        <name>substrate</name>
    </ligand>
</feature>
<accession>P0AGB2</accession>
<accession>P06862</accession>
<reference key="1">
    <citation type="journal article" date="2002" name="Nucleic Acids Res.">
        <title>Genome sequence of Shigella flexneri 2a: insights into pathogenicity through comparison with genomes of Escherichia coli K12 and O157.</title>
        <authorList>
            <person name="Jin Q."/>
            <person name="Yuan Z."/>
            <person name="Xu J."/>
            <person name="Wang Y."/>
            <person name="Shen Y."/>
            <person name="Lu W."/>
            <person name="Wang J."/>
            <person name="Liu H."/>
            <person name="Yang J."/>
            <person name="Yang F."/>
            <person name="Zhang X."/>
            <person name="Zhang J."/>
            <person name="Yang G."/>
            <person name="Wu H."/>
            <person name="Qu D."/>
            <person name="Dong J."/>
            <person name="Sun L."/>
            <person name="Xue Y."/>
            <person name="Zhao A."/>
            <person name="Gao Y."/>
            <person name="Zhu J."/>
            <person name="Kan B."/>
            <person name="Ding K."/>
            <person name="Chen S."/>
            <person name="Cheng H."/>
            <person name="Yao Z."/>
            <person name="He B."/>
            <person name="Chen R."/>
            <person name="Ma D."/>
            <person name="Qiang B."/>
            <person name="Wen Y."/>
            <person name="Hou Y."/>
            <person name="Yu J."/>
        </authorList>
    </citation>
    <scope>NUCLEOTIDE SEQUENCE [LARGE SCALE GENOMIC DNA]</scope>
    <source>
        <strain>301 / Serotype 2a</strain>
    </source>
</reference>
<reference key="2">
    <citation type="journal article" date="2003" name="Infect. Immun.">
        <title>Complete genome sequence and comparative genomics of Shigella flexneri serotype 2a strain 2457T.</title>
        <authorList>
            <person name="Wei J."/>
            <person name="Goldberg M.B."/>
            <person name="Burland V."/>
            <person name="Venkatesan M.M."/>
            <person name="Deng W."/>
            <person name="Fournier G."/>
            <person name="Mayhew G.F."/>
            <person name="Plunkett G. III"/>
            <person name="Rose D.J."/>
            <person name="Darling A."/>
            <person name="Mau B."/>
            <person name="Perna N.T."/>
            <person name="Payne S.M."/>
            <person name="Runyen-Janecky L.J."/>
            <person name="Zhou S."/>
            <person name="Schwartz D.C."/>
            <person name="Blattner F.R."/>
        </authorList>
    </citation>
    <scope>NUCLEOTIDE SEQUENCE [LARGE SCALE GENOMIC DNA]</scope>
    <source>
        <strain>ATCC 700930 / 2457T / Serotype 2a</strain>
    </source>
</reference>
<dbReference type="EC" id="3.1.3.3"/>
<dbReference type="EMBL" id="AE005674">
    <property type="protein sequence ID" value="AAN45834.1"/>
    <property type="molecule type" value="Genomic_DNA"/>
</dbReference>
<dbReference type="EMBL" id="AE014073">
    <property type="protein sequence ID" value="AAP19608.1"/>
    <property type="molecule type" value="Genomic_DNA"/>
</dbReference>
<dbReference type="RefSeq" id="NP_710127.1">
    <property type="nucleotide sequence ID" value="NC_004337.2"/>
</dbReference>
<dbReference type="RefSeq" id="WP_001132955.1">
    <property type="nucleotide sequence ID" value="NZ_WPGW01000013.1"/>
</dbReference>
<dbReference type="SMR" id="P0AGB2"/>
<dbReference type="STRING" id="198214.SF4420"/>
<dbReference type="PaxDb" id="198214-SF4420"/>
<dbReference type="GeneID" id="1025178"/>
<dbReference type="GeneID" id="93777457"/>
<dbReference type="KEGG" id="sfl:SF4420"/>
<dbReference type="KEGG" id="sfx:S4691"/>
<dbReference type="PATRIC" id="fig|198214.7.peg.5209"/>
<dbReference type="HOGENOM" id="CLU_036368_4_0_6"/>
<dbReference type="UniPathway" id="UPA00135">
    <property type="reaction ID" value="UER00198"/>
</dbReference>
<dbReference type="Proteomes" id="UP000001006">
    <property type="component" value="Chromosome"/>
</dbReference>
<dbReference type="Proteomes" id="UP000002673">
    <property type="component" value="Chromosome"/>
</dbReference>
<dbReference type="GO" id="GO:0005737">
    <property type="term" value="C:cytoplasm"/>
    <property type="evidence" value="ECO:0007669"/>
    <property type="project" value="TreeGrafter"/>
</dbReference>
<dbReference type="GO" id="GO:0036424">
    <property type="term" value="F:L-phosphoserine phosphatase activity"/>
    <property type="evidence" value="ECO:0007669"/>
    <property type="project" value="InterPro"/>
</dbReference>
<dbReference type="GO" id="GO:0000287">
    <property type="term" value="F:magnesium ion binding"/>
    <property type="evidence" value="ECO:0007669"/>
    <property type="project" value="TreeGrafter"/>
</dbReference>
<dbReference type="GO" id="GO:0006564">
    <property type="term" value="P:L-serine biosynthetic process"/>
    <property type="evidence" value="ECO:0007669"/>
    <property type="project" value="UniProtKB-KW"/>
</dbReference>
<dbReference type="CDD" id="cd07500">
    <property type="entry name" value="HAD_PSP"/>
    <property type="match status" value="1"/>
</dbReference>
<dbReference type="FunFam" id="1.10.150.210:FF:000001">
    <property type="entry name" value="Phosphoserine phosphatase"/>
    <property type="match status" value="1"/>
</dbReference>
<dbReference type="FunFam" id="3.40.50.1000:FF:000048">
    <property type="entry name" value="Phosphoserine phosphatase"/>
    <property type="match status" value="1"/>
</dbReference>
<dbReference type="Gene3D" id="3.30.70.2020">
    <property type="match status" value="1"/>
</dbReference>
<dbReference type="Gene3D" id="3.40.50.1000">
    <property type="entry name" value="HAD superfamily/HAD-like"/>
    <property type="match status" value="1"/>
</dbReference>
<dbReference type="Gene3D" id="1.10.150.210">
    <property type="entry name" value="Phosphoserine phosphatase, domain 2"/>
    <property type="match status" value="1"/>
</dbReference>
<dbReference type="InterPro" id="IPR050582">
    <property type="entry name" value="HAD-like_SerB"/>
</dbReference>
<dbReference type="InterPro" id="IPR036412">
    <property type="entry name" value="HAD-like_sf"/>
</dbReference>
<dbReference type="InterPro" id="IPR023214">
    <property type="entry name" value="HAD_sf"/>
</dbReference>
<dbReference type="InterPro" id="IPR004469">
    <property type="entry name" value="PSP"/>
</dbReference>
<dbReference type="InterPro" id="IPR041449">
    <property type="entry name" value="SerB_N"/>
</dbReference>
<dbReference type="NCBIfam" id="TIGR01488">
    <property type="entry name" value="HAD-SF-IB"/>
    <property type="match status" value="1"/>
</dbReference>
<dbReference type="NCBIfam" id="NF008350">
    <property type="entry name" value="PRK11133.1"/>
    <property type="match status" value="1"/>
</dbReference>
<dbReference type="NCBIfam" id="TIGR00338">
    <property type="entry name" value="serB"/>
    <property type="match status" value="1"/>
</dbReference>
<dbReference type="PANTHER" id="PTHR43344">
    <property type="entry name" value="PHOSPHOSERINE PHOSPHATASE"/>
    <property type="match status" value="1"/>
</dbReference>
<dbReference type="PANTHER" id="PTHR43344:SF2">
    <property type="entry name" value="PHOSPHOSERINE PHOSPHATASE"/>
    <property type="match status" value="1"/>
</dbReference>
<dbReference type="Pfam" id="PF18429">
    <property type="entry name" value="DUF5609"/>
    <property type="match status" value="1"/>
</dbReference>
<dbReference type="Pfam" id="PF12710">
    <property type="entry name" value="HAD"/>
    <property type="match status" value="1"/>
</dbReference>
<dbReference type="SFLD" id="SFLDG01136">
    <property type="entry name" value="C1.6:_Phosphoserine_Phosphatas"/>
    <property type="match status" value="1"/>
</dbReference>
<dbReference type="SFLD" id="SFLDF00029">
    <property type="entry name" value="phosphoserine_phosphatase"/>
    <property type="match status" value="1"/>
</dbReference>
<dbReference type="SUPFAM" id="SSF56784">
    <property type="entry name" value="HAD-like"/>
    <property type="match status" value="1"/>
</dbReference>
<comment type="function">
    <text evidence="1">Catalyzes the dephosphorylation of phosphoserine (P-Ser).</text>
</comment>
<comment type="catalytic activity">
    <reaction>
        <text>O-phospho-L-serine + H2O = L-serine + phosphate</text>
        <dbReference type="Rhea" id="RHEA:21208"/>
        <dbReference type="ChEBI" id="CHEBI:15377"/>
        <dbReference type="ChEBI" id="CHEBI:33384"/>
        <dbReference type="ChEBI" id="CHEBI:43474"/>
        <dbReference type="ChEBI" id="CHEBI:57524"/>
        <dbReference type="EC" id="3.1.3.3"/>
    </reaction>
</comment>
<comment type="catalytic activity">
    <reaction>
        <text>O-phospho-D-serine + H2O = D-serine + phosphate</text>
        <dbReference type="Rhea" id="RHEA:24873"/>
        <dbReference type="ChEBI" id="CHEBI:15377"/>
        <dbReference type="ChEBI" id="CHEBI:35247"/>
        <dbReference type="ChEBI" id="CHEBI:43474"/>
        <dbReference type="ChEBI" id="CHEBI:58680"/>
        <dbReference type="EC" id="3.1.3.3"/>
    </reaction>
</comment>
<comment type="cofactor">
    <cofactor evidence="1">
        <name>Mg(2+)</name>
        <dbReference type="ChEBI" id="CHEBI:18420"/>
    </cofactor>
    <text evidence="1">Binds 1 Mg(2+) ion per subunit.</text>
</comment>
<comment type="pathway">
    <text>Amino-acid biosynthesis; L-serine biosynthesis; L-serine from 3-phospho-D-glycerate: step 3/3.</text>
</comment>
<comment type="similarity">
    <text evidence="2">Belongs to the HAD-like hydrolase superfamily. SerB family.</text>
</comment>
<protein>
    <recommendedName>
        <fullName>Phosphoserine phosphatase</fullName>
        <shortName>PSP</shortName>
        <shortName>PSPase</shortName>
        <ecNumber>3.1.3.3</ecNumber>
    </recommendedName>
    <alternativeName>
        <fullName>O-phosphoserine phosphohydrolase</fullName>
    </alternativeName>
</protein>